<protein>
    <recommendedName>
        <fullName>Putative S-adenosyl-L-methionine-dependent methyltransferase MUL_2766</fullName>
        <ecNumber>2.1.1.-</ecNumber>
    </recommendedName>
</protein>
<feature type="chain" id="PRO_0000361245" description="Putative S-adenosyl-L-methionine-dependent methyltransferase MUL_2766">
    <location>
        <begin position="1"/>
        <end position="310"/>
    </location>
</feature>
<feature type="binding site" evidence="1">
    <location>
        <position position="131"/>
    </location>
    <ligand>
        <name>S-adenosyl-L-methionine</name>
        <dbReference type="ChEBI" id="CHEBI:59789"/>
    </ligand>
</feature>
<feature type="binding site" evidence="1">
    <location>
        <begin position="160"/>
        <end position="161"/>
    </location>
    <ligand>
        <name>S-adenosyl-L-methionine</name>
        <dbReference type="ChEBI" id="CHEBI:59789"/>
    </ligand>
</feature>
<keyword id="KW-0489">Methyltransferase</keyword>
<keyword id="KW-0949">S-adenosyl-L-methionine</keyword>
<keyword id="KW-0808">Transferase</keyword>
<comment type="function">
    <text evidence="1">Exhibits S-adenosyl-L-methionine-dependent methyltransferase activity.</text>
</comment>
<comment type="similarity">
    <text evidence="2">Belongs to the UPF0677 family.</text>
</comment>
<dbReference type="EC" id="2.1.1.-"/>
<dbReference type="EMBL" id="CP000325">
    <property type="protein sequence ID" value="ABL05069.1"/>
    <property type="molecule type" value="Genomic_DNA"/>
</dbReference>
<dbReference type="RefSeq" id="WP_011740683.1">
    <property type="nucleotide sequence ID" value="NC_008611.1"/>
</dbReference>
<dbReference type="SMR" id="A0PRV0"/>
<dbReference type="KEGG" id="mul:MUL_2766"/>
<dbReference type="eggNOG" id="COG3315">
    <property type="taxonomic scope" value="Bacteria"/>
</dbReference>
<dbReference type="HOGENOM" id="CLU_056160_2_1_11"/>
<dbReference type="Proteomes" id="UP000000765">
    <property type="component" value="Chromosome"/>
</dbReference>
<dbReference type="GO" id="GO:0008168">
    <property type="term" value="F:methyltransferase activity"/>
    <property type="evidence" value="ECO:0007669"/>
    <property type="project" value="UniProtKB-KW"/>
</dbReference>
<dbReference type="GO" id="GO:0032259">
    <property type="term" value="P:methylation"/>
    <property type="evidence" value="ECO:0007669"/>
    <property type="project" value="UniProtKB-KW"/>
</dbReference>
<dbReference type="Gene3D" id="3.40.50.150">
    <property type="entry name" value="Vaccinia Virus protein VP39"/>
    <property type="match status" value="1"/>
</dbReference>
<dbReference type="InterPro" id="IPR007213">
    <property type="entry name" value="Ppm1/Ppm2/Tcmp"/>
</dbReference>
<dbReference type="InterPro" id="IPR029063">
    <property type="entry name" value="SAM-dependent_MTases_sf"/>
</dbReference>
<dbReference type="InterPro" id="IPR011610">
    <property type="entry name" value="SAM_mthyl_Trfase_ML2640-like"/>
</dbReference>
<dbReference type="NCBIfam" id="TIGR00027">
    <property type="entry name" value="mthyl_TIGR00027"/>
    <property type="match status" value="1"/>
</dbReference>
<dbReference type="PANTHER" id="PTHR43619">
    <property type="entry name" value="S-ADENOSYL-L-METHIONINE-DEPENDENT METHYLTRANSFERASE YKTD-RELATED"/>
    <property type="match status" value="1"/>
</dbReference>
<dbReference type="PANTHER" id="PTHR43619:SF2">
    <property type="entry name" value="S-ADENOSYL-L-METHIONINE-DEPENDENT METHYLTRANSFERASES SUPERFAMILY PROTEIN"/>
    <property type="match status" value="1"/>
</dbReference>
<dbReference type="Pfam" id="PF04072">
    <property type="entry name" value="LCM"/>
    <property type="match status" value="1"/>
</dbReference>
<dbReference type="SUPFAM" id="SSF53335">
    <property type="entry name" value="S-adenosyl-L-methionine-dependent methyltransferases"/>
    <property type="match status" value="1"/>
</dbReference>
<gene>
    <name type="ordered locus">MUL_2766</name>
</gene>
<proteinExistence type="inferred from homology"/>
<name>Y2766_MYCUA</name>
<evidence type="ECO:0000250" key="1"/>
<evidence type="ECO:0000305" key="2"/>
<sequence length="310" mass="33773">MPRTDNDSWDLATSVGATATMVAAARAIATNADNPLIADRFAEPLVRAVGVDFFTRWVTGDLVVADVDDTESGWQLAQMPDAMAVRARFFDAFFQDATRAGVRQAVILASGLDARAYRLDWPAGMTVFEIDQPEVIAFKTTTLAGLGAVPRADLRTVAVDLRQDWPKALTEAGFDAGRPTAWIAEGLFGYLPPEAQDRLLDNITALSATGSRLACEAIPNRPQQDAEKARELMRKATARWREHGFELEFGDLGYEGDRADVELYLQNLGWQSVGTQMSQLLADNGAAPIPHNNDSVTMADTIYYSSVLTA</sequence>
<organism>
    <name type="scientific">Mycobacterium ulcerans (strain Agy99)</name>
    <dbReference type="NCBI Taxonomy" id="362242"/>
    <lineage>
        <taxon>Bacteria</taxon>
        <taxon>Bacillati</taxon>
        <taxon>Actinomycetota</taxon>
        <taxon>Actinomycetes</taxon>
        <taxon>Mycobacteriales</taxon>
        <taxon>Mycobacteriaceae</taxon>
        <taxon>Mycobacterium</taxon>
        <taxon>Mycobacterium ulcerans group</taxon>
    </lineage>
</organism>
<reference key="1">
    <citation type="journal article" date="2007" name="Genome Res.">
        <title>Reductive evolution and niche adaptation inferred from the genome of Mycobacterium ulcerans, the causative agent of Buruli ulcer.</title>
        <authorList>
            <person name="Stinear T.P."/>
            <person name="Seemann T."/>
            <person name="Pidot S."/>
            <person name="Frigui W."/>
            <person name="Reysset G."/>
            <person name="Garnier T."/>
            <person name="Meurice G."/>
            <person name="Simon D."/>
            <person name="Bouchier C."/>
            <person name="Ma L."/>
            <person name="Tichit M."/>
            <person name="Porter J.L."/>
            <person name="Ryan J."/>
            <person name="Johnson P.D.R."/>
            <person name="Davies J.K."/>
            <person name="Jenkin G.A."/>
            <person name="Small P.L.C."/>
            <person name="Jones L.M."/>
            <person name="Tekaia F."/>
            <person name="Laval F."/>
            <person name="Daffe M."/>
            <person name="Parkhill J."/>
            <person name="Cole S.T."/>
        </authorList>
    </citation>
    <scope>NUCLEOTIDE SEQUENCE [LARGE SCALE GENOMIC DNA]</scope>
    <source>
        <strain>Agy99</strain>
    </source>
</reference>
<accession>A0PRV0</accession>